<feature type="chain" id="PRO_1000133686" description="DNA replication and repair protein RecF">
    <location>
        <begin position="1"/>
        <end position="357"/>
    </location>
</feature>
<feature type="binding site" evidence="1">
    <location>
        <begin position="30"/>
        <end position="37"/>
    </location>
    <ligand>
        <name>ATP</name>
        <dbReference type="ChEBI" id="CHEBI:30616"/>
    </ligand>
</feature>
<keyword id="KW-0067">ATP-binding</keyword>
<keyword id="KW-0963">Cytoplasm</keyword>
<keyword id="KW-0227">DNA damage</keyword>
<keyword id="KW-0234">DNA repair</keyword>
<keyword id="KW-0235">DNA replication</keyword>
<keyword id="KW-0238">DNA-binding</keyword>
<keyword id="KW-0547">Nucleotide-binding</keyword>
<keyword id="KW-1185">Reference proteome</keyword>
<keyword id="KW-0742">SOS response</keyword>
<sequence>MSLTRLLIRDFRNIETADLALSPGFNFLVGANGSGKTSVLEAIYTLGHGRAFRSLQIGRVIRHEQEAFVLHGRLQGEERETAIGLTKDKQGDSKVRIDGTDGHKVAELAHLMPMQLITPEGFTLLNGGPKYRRAFLDWGCFHNEPGFFTAWSNLKRLLKQRNAALRQVTRYEQLRPWDKELIPLAEQISTWRAEYSAGIAADMADTCKQFLPEFSLTFSFQRGWEKETEYAEVLERNFERDRQLTYTAHGPHKADLRIRADGAPVEDTLSRGQLKLLMCALRLAQGEFLTRESGRRCLYLIDDFASELDDERRGLLASRLKATQSQVFVSAISAEHVIDMSDENSKMFTVEKGKITD</sequence>
<gene>
    <name evidence="1" type="primary">recF</name>
    <name type="ordered locus">E2348C_4011</name>
</gene>
<reference key="1">
    <citation type="journal article" date="2009" name="J. Bacteriol.">
        <title>Complete genome sequence and comparative genome analysis of enteropathogenic Escherichia coli O127:H6 strain E2348/69.</title>
        <authorList>
            <person name="Iguchi A."/>
            <person name="Thomson N.R."/>
            <person name="Ogura Y."/>
            <person name="Saunders D."/>
            <person name="Ooka T."/>
            <person name="Henderson I.R."/>
            <person name="Harris D."/>
            <person name="Asadulghani M."/>
            <person name="Kurokawa K."/>
            <person name="Dean P."/>
            <person name="Kenny B."/>
            <person name="Quail M.A."/>
            <person name="Thurston S."/>
            <person name="Dougan G."/>
            <person name="Hayashi T."/>
            <person name="Parkhill J."/>
            <person name="Frankel G."/>
        </authorList>
    </citation>
    <scope>NUCLEOTIDE SEQUENCE [LARGE SCALE GENOMIC DNA]</scope>
    <source>
        <strain>E2348/69 / EPEC</strain>
    </source>
</reference>
<reference key="2">
    <citation type="journal article" date="2020" name="Cell Rep.">
        <title>DNA ADP-Ribosylation Stalls Replication and Is Reversed by RecF-Mediated Homologous Recombination and Nucleotide Excision Repair.</title>
        <authorList>
            <person name="Lawaree E."/>
            <person name="Jankevicius G."/>
            <person name="Cooper C."/>
            <person name="Ahel I."/>
            <person name="Uphoff S."/>
            <person name="Tang C.M."/>
        </authorList>
    </citation>
    <scope>FUNCTION</scope>
    <scope>DISRUPTION PHENOTYPE</scope>
    <source>
        <strain>E2348/69 / EPEC</strain>
    </source>
</reference>
<proteinExistence type="inferred from homology"/>
<organism>
    <name type="scientific">Escherichia coli O127:H6 (strain E2348/69 / EPEC)</name>
    <dbReference type="NCBI Taxonomy" id="574521"/>
    <lineage>
        <taxon>Bacteria</taxon>
        <taxon>Pseudomonadati</taxon>
        <taxon>Pseudomonadota</taxon>
        <taxon>Gammaproteobacteria</taxon>
        <taxon>Enterobacterales</taxon>
        <taxon>Enterobacteriaceae</taxon>
        <taxon>Escherichia</taxon>
    </lineage>
</organism>
<comment type="function">
    <text evidence="1">The RecF protein is involved in DNA metabolism; it is required for DNA replication and normal SOS inducibility. RecF binds preferentially to single-stranded, linear DNA. It also seems to bind ATP.</text>
</comment>
<comment type="function">
    <text evidence="2">Plays a role in recovery after DNA ADP-ribosylation.</text>
</comment>
<comment type="subcellular location">
    <subcellularLocation>
        <location evidence="1">Cytoplasm</location>
    </subcellularLocation>
</comment>
<comment type="disruption phenotype">
    <text evidence="2">Significantly reduced survival of cells expressing DNA ADP-ribosyl transferase (darT) mutant G49D.</text>
</comment>
<comment type="similarity">
    <text evidence="1">Belongs to the RecF family.</text>
</comment>
<dbReference type="EMBL" id="FM180568">
    <property type="protein sequence ID" value="CAS11559.1"/>
    <property type="molecule type" value="Genomic_DNA"/>
</dbReference>
<dbReference type="RefSeq" id="WP_000060112.1">
    <property type="nucleotide sequence ID" value="NC_011601.1"/>
</dbReference>
<dbReference type="SMR" id="B7UMG7"/>
<dbReference type="GeneID" id="93778441"/>
<dbReference type="KEGG" id="ecg:E2348C_4011"/>
<dbReference type="HOGENOM" id="CLU_040267_0_0_6"/>
<dbReference type="Proteomes" id="UP000008205">
    <property type="component" value="Chromosome"/>
</dbReference>
<dbReference type="GO" id="GO:0005737">
    <property type="term" value="C:cytoplasm"/>
    <property type="evidence" value="ECO:0007669"/>
    <property type="project" value="UniProtKB-SubCell"/>
</dbReference>
<dbReference type="GO" id="GO:0005524">
    <property type="term" value="F:ATP binding"/>
    <property type="evidence" value="ECO:0007669"/>
    <property type="project" value="UniProtKB-UniRule"/>
</dbReference>
<dbReference type="GO" id="GO:0003697">
    <property type="term" value="F:single-stranded DNA binding"/>
    <property type="evidence" value="ECO:0007669"/>
    <property type="project" value="UniProtKB-UniRule"/>
</dbReference>
<dbReference type="GO" id="GO:0006260">
    <property type="term" value="P:DNA replication"/>
    <property type="evidence" value="ECO:0007669"/>
    <property type="project" value="UniProtKB-UniRule"/>
</dbReference>
<dbReference type="GO" id="GO:0000731">
    <property type="term" value="P:DNA synthesis involved in DNA repair"/>
    <property type="evidence" value="ECO:0007669"/>
    <property type="project" value="TreeGrafter"/>
</dbReference>
<dbReference type="GO" id="GO:0006302">
    <property type="term" value="P:double-strand break repair"/>
    <property type="evidence" value="ECO:0007669"/>
    <property type="project" value="TreeGrafter"/>
</dbReference>
<dbReference type="GO" id="GO:0009432">
    <property type="term" value="P:SOS response"/>
    <property type="evidence" value="ECO:0007669"/>
    <property type="project" value="UniProtKB-UniRule"/>
</dbReference>
<dbReference type="FunFam" id="1.20.1050.90:FF:000001">
    <property type="entry name" value="DNA replication and repair protein RecF"/>
    <property type="match status" value="1"/>
</dbReference>
<dbReference type="Gene3D" id="3.40.50.300">
    <property type="entry name" value="P-loop containing nucleotide triphosphate hydrolases"/>
    <property type="match status" value="1"/>
</dbReference>
<dbReference type="Gene3D" id="1.20.1050.90">
    <property type="entry name" value="RecF/RecN/SMC, N-terminal domain"/>
    <property type="match status" value="1"/>
</dbReference>
<dbReference type="HAMAP" id="MF_00365">
    <property type="entry name" value="RecF"/>
    <property type="match status" value="1"/>
</dbReference>
<dbReference type="InterPro" id="IPR001238">
    <property type="entry name" value="DNA-binding_RecF"/>
</dbReference>
<dbReference type="InterPro" id="IPR018078">
    <property type="entry name" value="DNA-binding_RecF_CS"/>
</dbReference>
<dbReference type="InterPro" id="IPR027417">
    <property type="entry name" value="P-loop_NTPase"/>
</dbReference>
<dbReference type="InterPro" id="IPR003395">
    <property type="entry name" value="RecF/RecN/SMC_N"/>
</dbReference>
<dbReference type="InterPro" id="IPR042174">
    <property type="entry name" value="RecF_2"/>
</dbReference>
<dbReference type="NCBIfam" id="TIGR00611">
    <property type="entry name" value="recf"/>
    <property type="match status" value="1"/>
</dbReference>
<dbReference type="PANTHER" id="PTHR32182">
    <property type="entry name" value="DNA REPLICATION AND REPAIR PROTEIN RECF"/>
    <property type="match status" value="1"/>
</dbReference>
<dbReference type="PANTHER" id="PTHR32182:SF0">
    <property type="entry name" value="DNA REPLICATION AND REPAIR PROTEIN RECF"/>
    <property type="match status" value="1"/>
</dbReference>
<dbReference type="Pfam" id="PF02463">
    <property type="entry name" value="SMC_N"/>
    <property type="match status" value="1"/>
</dbReference>
<dbReference type="SUPFAM" id="SSF52540">
    <property type="entry name" value="P-loop containing nucleoside triphosphate hydrolases"/>
    <property type="match status" value="1"/>
</dbReference>
<dbReference type="PROSITE" id="PS00617">
    <property type="entry name" value="RECF_1"/>
    <property type="match status" value="1"/>
</dbReference>
<dbReference type="PROSITE" id="PS00618">
    <property type="entry name" value="RECF_2"/>
    <property type="match status" value="1"/>
</dbReference>
<evidence type="ECO:0000255" key="1">
    <source>
        <dbReference type="HAMAP-Rule" id="MF_00365"/>
    </source>
</evidence>
<evidence type="ECO:0000269" key="2">
    <source>
    </source>
</evidence>
<protein>
    <recommendedName>
        <fullName evidence="1">DNA replication and repair protein RecF</fullName>
    </recommendedName>
</protein>
<accession>B7UMG7</accession>
<name>RECF_ECO27</name>